<gene>
    <name type="primary">rpsE</name>
    <name type="synonym">spcA</name>
    <name type="ordered locus">BSU01330</name>
</gene>
<feature type="chain" id="PRO_0000131470" description="Small ribosomal subunit protein uS5">
    <location>
        <begin position="1"/>
        <end position="166"/>
    </location>
</feature>
<feature type="domain" description="S5 DRBM">
    <location>
        <begin position="11"/>
        <end position="74"/>
    </location>
</feature>
<feature type="sequence variant" description="In 1A241; spectinomycin resistant." evidence="4">
    <location>
        <begin position="24"/>
        <end position="26"/>
    </location>
</feature>
<feature type="sequence variant" description="In BSPC 111; spectinomycin resistant." evidence="3">
    <original>K</original>
    <variation>I</variation>
    <location>
        <position position="26"/>
    </location>
</feature>
<feature type="sequence variant" description="In rpsE1; spectinomycin restistant, not a ram mutant." evidence="2">
    <original>G</original>
    <variation>V</variation>
    <location>
        <position position="28"/>
    </location>
</feature>
<feature type="sequence variant" description="In BPSC-31 and BPSC-61; spectinomycin resistant." evidence="6">
    <location>
        <position position="30"/>
    </location>
</feature>
<feature type="sequence variant" description="In rpsE9; suppresses S12 mutation K55D. Lethal in the absence of the S12 mutation." evidence="2">
    <original>G</original>
    <variation>R</variation>
    <location>
        <position position="104"/>
    </location>
</feature>
<feature type="sequence variant" description="In rpsE8; suppresses S12 mutant K55D. RspE8 is lethal in the absence of the S12 mutation." evidence="2">
    <original>R</original>
    <variation>C</variation>
    <location>
        <position position="112"/>
    </location>
</feature>
<feature type="sequence variant" description="In rpsE7; suppresses S12 mutant K55D. A ram mutation." evidence="2">
    <original>R</original>
    <variation>H</variation>
    <location>
        <position position="112"/>
    </location>
</feature>
<feature type="strand" evidence="10">
    <location>
        <begin position="7"/>
        <end position="9"/>
    </location>
</feature>
<feature type="strand" evidence="10">
    <location>
        <begin position="12"/>
        <end position="25"/>
    </location>
</feature>
<feature type="strand" evidence="10">
    <location>
        <begin position="28"/>
        <end position="40"/>
    </location>
</feature>
<feature type="strand" evidence="10">
    <location>
        <begin position="42"/>
        <end position="55"/>
    </location>
</feature>
<feature type="helix" evidence="10">
    <location>
        <begin position="56"/>
        <end position="69"/>
    </location>
</feature>
<feature type="strand" evidence="10">
    <location>
        <begin position="71"/>
        <end position="73"/>
    </location>
</feature>
<feature type="strand" evidence="10">
    <location>
        <begin position="85"/>
        <end position="89"/>
    </location>
</feature>
<feature type="strand" evidence="10">
    <location>
        <begin position="92"/>
        <end position="98"/>
    </location>
</feature>
<feature type="helix" evidence="10">
    <location>
        <begin position="110"/>
        <end position="118"/>
    </location>
</feature>
<feature type="strand" evidence="10">
    <location>
        <begin position="122"/>
        <end position="127"/>
    </location>
</feature>
<feature type="helix" evidence="10">
    <location>
        <begin position="133"/>
        <end position="145"/>
    </location>
</feature>
<feature type="helix" evidence="10">
    <location>
        <begin position="150"/>
        <end position="157"/>
    </location>
</feature>
<organism>
    <name type="scientific">Bacillus subtilis (strain 168)</name>
    <dbReference type="NCBI Taxonomy" id="224308"/>
    <lineage>
        <taxon>Bacteria</taxon>
        <taxon>Bacillati</taxon>
        <taxon>Bacillota</taxon>
        <taxon>Bacilli</taxon>
        <taxon>Bacillales</taxon>
        <taxon>Bacillaceae</taxon>
        <taxon>Bacillus</taxon>
    </lineage>
</organism>
<name>RS5_BACSU</name>
<keyword id="KW-0002">3D-structure</keyword>
<keyword id="KW-0046">Antibiotic resistance</keyword>
<keyword id="KW-0903">Direct protein sequencing</keyword>
<keyword id="KW-1185">Reference proteome</keyword>
<keyword id="KW-0687">Ribonucleoprotein</keyword>
<keyword id="KW-0689">Ribosomal protein</keyword>
<keyword id="KW-0694">RNA-binding</keyword>
<keyword id="KW-0699">rRNA-binding</keyword>
<protein>
    <recommendedName>
        <fullName evidence="7">Small ribosomal subunit protein uS5</fullName>
    </recommendedName>
    <alternativeName>
        <fullName>30S ribosomal protein S5</fullName>
        <shortName>BS5</shortName>
    </alternativeName>
</protein>
<proteinExistence type="evidence at protein level"/>
<accession>P21467</accession>
<reference key="1">
    <citation type="journal article" date="1996" name="Gene">
        <title>Genetic and transcriptional organization of the Bacillus subtilis spc-alpha region.</title>
        <authorList>
            <person name="Suh J.-W."/>
            <person name="Boylan S.A."/>
            <person name="Oh S.H."/>
            <person name="Price C.W."/>
        </authorList>
    </citation>
    <scope>NUCLEOTIDE SEQUENCE [GENOMIC DNA]</scope>
    <source>
        <strain>168 / Marburg / ATCC 6051 / DSM 10 / JCM 1465 / NBRC 13719 / NCIMB 3610 / NRRL NRS-744 / VKM B-501</strain>
    </source>
</reference>
<reference key="2">
    <citation type="journal article" date="1990" name="Nucleic Acids Res.">
        <title>Sequence of the Bacillus subtilis spectinomycin resistance gene region.</title>
        <authorList>
            <person name="Yoshikawa H."/>
            <person name="Doi R.H."/>
        </authorList>
    </citation>
    <scope>NUCLEOTIDE SEQUENCE [GENOMIC DNA]</scope>
    <scope>VARIANT SPECTINOMYCIN RESISTANCE 24-VAL--LYS-26 DEL</scope>
    <source>
        <strain>1A241</strain>
    </source>
</reference>
<reference key="3">
    <citation type="journal article" date="1997" name="Nature">
        <title>The complete genome sequence of the Gram-positive bacterium Bacillus subtilis.</title>
        <authorList>
            <person name="Kunst F."/>
            <person name="Ogasawara N."/>
            <person name="Moszer I."/>
            <person name="Albertini A.M."/>
            <person name="Alloni G."/>
            <person name="Azevedo V."/>
            <person name="Bertero M.G."/>
            <person name="Bessieres P."/>
            <person name="Bolotin A."/>
            <person name="Borchert S."/>
            <person name="Borriss R."/>
            <person name="Boursier L."/>
            <person name="Brans A."/>
            <person name="Braun M."/>
            <person name="Brignell S.C."/>
            <person name="Bron S."/>
            <person name="Brouillet S."/>
            <person name="Bruschi C.V."/>
            <person name="Caldwell B."/>
            <person name="Capuano V."/>
            <person name="Carter N.M."/>
            <person name="Choi S.-K."/>
            <person name="Codani J.-J."/>
            <person name="Connerton I.F."/>
            <person name="Cummings N.J."/>
            <person name="Daniel R.A."/>
            <person name="Denizot F."/>
            <person name="Devine K.M."/>
            <person name="Duesterhoeft A."/>
            <person name="Ehrlich S.D."/>
            <person name="Emmerson P.T."/>
            <person name="Entian K.-D."/>
            <person name="Errington J."/>
            <person name="Fabret C."/>
            <person name="Ferrari E."/>
            <person name="Foulger D."/>
            <person name="Fritz C."/>
            <person name="Fujita M."/>
            <person name="Fujita Y."/>
            <person name="Fuma S."/>
            <person name="Galizzi A."/>
            <person name="Galleron N."/>
            <person name="Ghim S.-Y."/>
            <person name="Glaser P."/>
            <person name="Goffeau A."/>
            <person name="Golightly E.J."/>
            <person name="Grandi G."/>
            <person name="Guiseppi G."/>
            <person name="Guy B.J."/>
            <person name="Haga K."/>
            <person name="Haiech J."/>
            <person name="Harwood C.R."/>
            <person name="Henaut A."/>
            <person name="Hilbert H."/>
            <person name="Holsappel S."/>
            <person name="Hosono S."/>
            <person name="Hullo M.-F."/>
            <person name="Itaya M."/>
            <person name="Jones L.-M."/>
            <person name="Joris B."/>
            <person name="Karamata D."/>
            <person name="Kasahara Y."/>
            <person name="Klaerr-Blanchard M."/>
            <person name="Klein C."/>
            <person name="Kobayashi Y."/>
            <person name="Koetter P."/>
            <person name="Koningstein G."/>
            <person name="Krogh S."/>
            <person name="Kumano M."/>
            <person name="Kurita K."/>
            <person name="Lapidus A."/>
            <person name="Lardinois S."/>
            <person name="Lauber J."/>
            <person name="Lazarevic V."/>
            <person name="Lee S.-M."/>
            <person name="Levine A."/>
            <person name="Liu H."/>
            <person name="Masuda S."/>
            <person name="Mauel C."/>
            <person name="Medigue C."/>
            <person name="Medina N."/>
            <person name="Mellado R.P."/>
            <person name="Mizuno M."/>
            <person name="Moestl D."/>
            <person name="Nakai S."/>
            <person name="Noback M."/>
            <person name="Noone D."/>
            <person name="O'Reilly M."/>
            <person name="Ogawa K."/>
            <person name="Ogiwara A."/>
            <person name="Oudega B."/>
            <person name="Park S.-H."/>
            <person name="Parro V."/>
            <person name="Pohl T.M."/>
            <person name="Portetelle D."/>
            <person name="Porwollik S."/>
            <person name="Prescott A.M."/>
            <person name="Presecan E."/>
            <person name="Pujic P."/>
            <person name="Purnelle B."/>
            <person name="Rapoport G."/>
            <person name="Rey M."/>
            <person name="Reynolds S."/>
            <person name="Rieger M."/>
            <person name="Rivolta C."/>
            <person name="Rocha E."/>
            <person name="Roche B."/>
            <person name="Rose M."/>
            <person name="Sadaie Y."/>
            <person name="Sato T."/>
            <person name="Scanlan E."/>
            <person name="Schleich S."/>
            <person name="Schroeter R."/>
            <person name="Scoffone F."/>
            <person name="Sekiguchi J."/>
            <person name="Sekowska A."/>
            <person name="Seror S.J."/>
            <person name="Serror P."/>
            <person name="Shin B.-S."/>
            <person name="Soldo B."/>
            <person name="Sorokin A."/>
            <person name="Tacconi E."/>
            <person name="Takagi T."/>
            <person name="Takahashi H."/>
            <person name="Takemaru K."/>
            <person name="Takeuchi M."/>
            <person name="Tamakoshi A."/>
            <person name="Tanaka T."/>
            <person name="Terpstra P."/>
            <person name="Tognoni A."/>
            <person name="Tosato V."/>
            <person name="Uchiyama S."/>
            <person name="Vandenbol M."/>
            <person name="Vannier F."/>
            <person name="Vassarotti A."/>
            <person name="Viari A."/>
            <person name="Wambutt R."/>
            <person name="Wedler E."/>
            <person name="Wedler H."/>
            <person name="Weitzenegger T."/>
            <person name="Winters P."/>
            <person name="Wipat A."/>
            <person name="Yamamoto H."/>
            <person name="Yamane K."/>
            <person name="Yasumoto K."/>
            <person name="Yata K."/>
            <person name="Yoshida K."/>
            <person name="Yoshikawa H.-F."/>
            <person name="Zumstein E."/>
            <person name="Yoshikawa H."/>
            <person name="Danchin A."/>
        </authorList>
    </citation>
    <scope>NUCLEOTIDE SEQUENCE [LARGE SCALE GENOMIC DNA]</scope>
    <source>
        <strain>168</strain>
    </source>
</reference>
<reference key="4">
    <citation type="journal article" date="1996" name="Microbiology">
        <title>Sequence analysis of a 50 kb region between spo0H and rrnH on the Bacillus subtilis chromosome.</title>
        <authorList>
            <person name="Yasumoto K."/>
            <person name="Liu H."/>
            <person name="Jeong S.M."/>
            <person name="Ohashi Y."/>
            <person name="Kakinuma S."/>
            <person name="Tanaka K."/>
            <person name="Kawamura F."/>
            <person name="Yoshikawa H."/>
            <person name="Takahashi H."/>
        </authorList>
    </citation>
    <scope>NUCLEOTIDE SEQUENCE [GENOMIC DNA] OF 1-39</scope>
    <source>
        <strain>168</strain>
    </source>
</reference>
<reference key="5">
    <citation type="journal article" date="1982" name="Mol. Gen. Genet.">
        <title>Purification and characterization of 30S ribosomal proteins from Bacillus subtilis: correlation to Escherichia coli 30S proteins.</title>
        <authorList>
            <person name="Higo K."/>
            <person name="Otaka E."/>
            <person name="Osawa S."/>
        </authorList>
    </citation>
    <scope>PROTEIN SEQUENCE OF 1-40</scope>
</reference>
<reference key="6">
    <citation type="journal article" date="1982" name="Mol. Gen. Genet.">
        <title>Alteration of ribosomal protein S5 from two spectinomycin-resistant mutants of Bacillus subtilis: deletion of one amino acid residue.</title>
        <authorList>
            <person name="Higo K."/>
            <person name="Itoh T."/>
            <person name="Osawa S."/>
        </authorList>
    </citation>
    <scope>PROTEIN SEQUENCE OF 1-46</scope>
    <scope>VARIANT BPSC-31 ARG-30 DEL</scope>
    <scope>VARIANT BPSC-61 ARG-30 DEL</scope>
    <source>
        <strain>ATCC 6633 / PCI 219 / NRS 231</strain>
    </source>
</reference>
<reference key="7">
    <citation type="journal article" date="1976" name="Mol. Gen. Genet.">
        <title>Amino acid replacement in the protein S5 from a spectinomycin resistant mutant of Bacillus subtilis.</title>
        <authorList>
            <person name="Itoh T."/>
        </authorList>
    </citation>
    <scope>PROTEIN SEQUENCE OF 24-29</scope>
    <scope>VARIANT BSPC 111 ILE-26</scope>
    <source>
        <strain>ATCC 6633 / PCI 219 / NRS 231</strain>
    </source>
</reference>
<reference key="8">
    <citation type="journal article" date="2001" name="J. Bacteriol.">
        <title>Construction of an in vivo nonsense readthrough assay system and functional analysis of ribosomal proteins S12, S4, and S5 in Bacillus subtilis.</title>
        <authorList>
            <person name="Inaoka T."/>
            <person name="Kasai K."/>
            <person name="Ochi K."/>
        </authorList>
    </citation>
    <scope>CHARACTERIZATION</scope>
    <scope>VARIANT RPSE1 VAL-28</scope>
    <scope>VARIANT RPSE9 ARG-104</scope>
    <scope>VARIANT RPSE8 CYS-112</scope>
    <scope>VARIANT RPSE7 HIS-112</scope>
    <source>
        <strain>168</strain>
    </source>
</reference>
<reference evidence="8 9" key="9">
    <citation type="journal article" date="2018" name="Proc. Natl. Acad. Sci. U.S.A.">
        <title>Structural basis for antibiotic resistance mediated by the Bacillus subtilis ABCF ATPase VmlR.</title>
        <authorList>
            <person name="Crowe-McAuliffe C."/>
            <person name="Graf M."/>
            <person name="Huter P."/>
            <person name="Takada H."/>
            <person name="Abdelshahid M."/>
            <person name="Novacek J."/>
            <person name="Murina V."/>
            <person name="Atkinson G.C."/>
            <person name="Hauryliuk V."/>
            <person name="Wilson D.N."/>
        </authorList>
    </citation>
    <scope>STRUCTURE BY ELECTRON MICROSCOPY (3.10 ANGSTROMS) OF 1-166 WITH AND WITHOUT VIRGINIAMYCIN M</scope>
    <scope>SUBUNIT</scope>
</reference>
<evidence type="ECO:0000250" key="1"/>
<evidence type="ECO:0000269" key="2">
    <source>
    </source>
</evidence>
<evidence type="ECO:0000269" key="3">
    <source>
    </source>
</evidence>
<evidence type="ECO:0000269" key="4">
    <source>
    </source>
</evidence>
<evidence type="ECO:0000269" key="5">
    <source>
    </source>
</evidence>
<evidence type="ECO:0000269" key="6">
    <source>
    </source>
</evidence>
<evidence type="ECO:0000305" key="7"/>
<evidence type="ECO:0007744" key="8">
    <source>
        <dbReference type="PDB" id="6HA1"/>
    </source>
</evidence>
<evidence type="ECO:0007744" key="9">
    <source>
        <dbReference type="PDB" id="6HA8"/>
    </source>
</evidence>
<evidence type="ECO:0007829" key="10">
    <source>
        <dbReference type="PDB" id="8CDU"/>
    </source>
</evidence>
<sequence>MRRIDPSKLELEERLVTVNRVAKVVKGGRRFRFAALVVVGDKNGHVGFGTGKAQEVPEAIRKAVEDAKKNLIEVPMVGTTIPHEIIGRFGAGNILLKPASEGTGVIAGGPVRAVLELAGVADILSKSLGSNTPINMIRATLQGLSELKRAEDVAKLRGKSVEELLG</sequence>
<dbReference type="EMBL" id="L47971">
    <property type="protein sequence ID" value="AAB06816.1"/>
    <property type="molecule type" value="Genomic_DNA"/>
</dbReference>
<dbReference type="EMBL" id="M31102">
    <property type="protein sequence ID" value="AAB59115.1"/>
    <property type="status" value="ALT_INIT"/>
    <property type="molecule type" value="Genomic_DNA"/>
</dbReference>
<dbReference type="EMBL" id="AL009126">
    <property type="protein sequence ID" value="CAB11909.1"/>
    <property type="molecule type" value="Genomic_DNA"/>
</dbReference>
<dbReference type="EMBL" id="D64125">
    <property type="protein sequence ID" value="BAA20856.1"/>
    <property type="molecule type" value="Genomic_DNA"/>
</dbReference>
<dbReference type="PIR" id="D69699">
    <property type="entry name" value="R3BS5S"/>
</dbReference>
<dbReference type="RefSeq" id="NP_388014.1">
    <property type="nucleotide sequence ID" value="NC_000964.3"/>
</dbReference>
<dbReference type="RefSeq" id="WP_003328273.1">
    <property type="nucleotide sequence ID" value="NZ_OZ025638.1"/>
</dbReference>
<dbReference type="PDB" id="3J9W">
    <property type="method" value="EM"/>
    <property type="resolution" value="3.90 A"/>
    <property type="chains" value="AE=1-166"/>
</dbReference>
<dbReference type="PDB" id="5NJT">
    <property type="method" value="EM"/>
    <property type="resolution" value="3.80 A"/>
    <property type="chains" value="E=2-166"/>
</dbReference>
<dbReference type="PDB" id="6HA1">
    <property type="method" value="EM"/>
    <property type="resolution" value="3.10 A"/>
    <property type="chains" value="e=1-166"/>
</dbReference>
<dbReference type="PDB" id="6HA8">
    <property type="method" value="EM"/>
    <property type="resolution" value="3.50 A"/>
    <property type="chains" value="e=1-166"/>
</dbReference>
<dbReference type="PDB" id="6HTQ">
    <property type="method" value="EM"/>
    <property type="resolution" value="4.50 A"/>
    <property type="chains" value="e=3-166"/>
</dbReference>
<dbReference type="PDB" id="7O5B">
    <property type="method" value="EM"/>
    <property type="resolution" value="3.33 A"/>
    <property type="chains" value="E=1-166"/>
</dbReference>
<dbReference type="PDB" id="7QGU">
    <property type="method" value="EM"/>
    <property type="resolution" value="4.75 A"/>
    <property type="chains" value="j=1-166"/>
</dbReference>
<dbReference type="PDB" id="7QH4">
    <property type="method" value="EM"/>
    <property type="resolution" value="5.45 A"/>
    <property type="chains" value="i=1-166"/>
</dbReference>
<dbReference type="PDB" id="7QV1">
    <property type="method" value="EM"/>
    <property type="resolution" value="3.50 A"/>
    <property type="chains" value="e=1-166"/>
</dbReference>
<dbReference type="PDB" id="7QV2">
    <property type="method" value="EM"/>
    <property type="resolution" value="3.50 A"/>
    <property type="chains" value="e=1-166"/>
</dbReference>
<dbReference type="PDB" id="7QV3">
    <property type="method" value="EM"/>
    <property type="resolution" value="5.14 A"/>
    <property type="chains" value="e=1-166"/>
</dbReference>
<dbReference type="PDB" id="8BUU">
    <property type="method" value="EM"/>
    <property type="resolution" value="2.90 A"/>
    <property type="chains" value="e=1-166"/>
</dbReference>
<dbReference type="PDB" id="8CDU">
    <property type="method" value="EM"/>
    <property type="resolution" value="3.10 A"/>
    <property type="chains" value="G=1-166"/>
</dbReference>
<dbReference type="PDB" id="8CDV">
    <property type="method" value="EM"/>
    <property type="resolution" value="4.73 A"/>
    <property type="chains" value="G=1-166"/>
</dbReference>
<dbReference type="PDB" id="8CEC">
    <property type="method" value="EM"/>
    <property type="resolution" value="3.57 A"/>
    <property type="chains" value="G=1-166"/>
</dbReference>
<dbReference type="PDB" id="8CED">
    <property type="method" value="EM"/>
    <property type="resolution" value="4.15 A"/>
    <property type="chains" value="G=1-166"/>
</dbReference>
<dbReference type="PDB" id="8CEE">
    <property type="method" value="EM"/>
    <property type="resolution" value="3.70 A"/>
    <property type="chains" value="G=1-166"/>
</dbReference>
<dbReference type="PDB" id="8QCQ">
    <property type="method" value="EM"/>
    <property type="resolution" value="2.30 A"/>
    <property type="chains" value="e=1-166"/>
</dbReference>
<dbReference type="PDB" id="8QPP">
    <property type="method" value="EM"/>
    <property type="resolution" value="3.40 A"/>
    <property type="chains" value="E=1-166"/>
</dbReference>
<dbReference type="PDB" id="8R55">
    <property type="method" value="EM"/>
    <property type="resolution" value="3.57 A"/>
    <property type="chains" value="E=1-166"/>
</dbReference>
<dbReference type="PDBsum" id="3J9W"/>
<dbReference type="PDBsum" id="5NJT"/>
<dbReference type="PDBsum" id="6HA1"/>
<dbReference type="PDBsum" id="6HA8"/>
<dbReference type="PDBsum" id="6HTQ"/>
<dbReference type="PDBsum" id="7O5B"/>
<dbReference type="PDBsum" id="7QGU"/>
<dbReference type="PDBsum" id="7QH4"/>
<dbReference type="PDBsum" id="7QV1"/>
<dbReference type="PDBsum" id="7QV2"/>
<dbReference type="PDBsum" id="7QV3"/>
<dbReference type="PDBsum" id="8BUU"/>
<dbReference type="PDBsum" id="8CDU"/>
<dbReference type="PDBsum" id="8CDV"/>
<dbReference type="PDBsum" id="8CEC"/>
<dbReference type="PDBsum" id="8CED"/>
<dbReference type="PDBsum" id="8CEE"/>
<dbReference type="PDBsum" id="8QCQ"/>
<dbReference type="PDBsum" id="8QPP"/>
<dbReference type="PDBsum" id="8R55"/>
<dbReference type="EMDB" id="EMD-0176"/>
<dbReference type="EMDB" id="EMD-0177"/>
<dbReference type="EMDB" id="EMD-0270"/>
<dbReference type="EMDB" id="EMD-12734"/>
<dbReference type="EMDB" id="EMD-14157"/>
<dbReference type="EMDB" id="EMD-14158"/>
<dbReference type="EMDB" id="EMD-14159"/>
<dbReference type="EMDB" id="EMD-16246"/>
<dbReference type="EMDB" id="EMD-16595"/>
<dbReference type="EMDB" id="EMD-16596"/>
<dbReference type="EMDB" id="EMD-16605"/>
<dbReference type="EMDB" id="EMD-16606"/>
<dbReference type="EMDB" id="EMD-16607"/>
<dbReference type="EMDB" id="EMD-18332"/>
<dbReference type="EMDB" id="EMD-3656"/>
<dbReference type="SMR" id="P21467"/>
<dbReference type="FunCoup" id="P21467">
    <property type="interactions" value="795"/>
</dbReference>
<dbReference type="STRING" id="224308.BSU01330"/>
<dbReference type="jPOST" id="P21467"/>
<dbReference type="PaxDb" id="224308-BSU01330"/>
<dbReference type="EnsemblBacteria" id="CAB11909">
    <property type="protein sequence ID" value="CAB11909"/>
    <property type="gene ID" value="BSU_01330"/>
</dbReference>
<dbReference type="GeneID" id="92915208"/>
<dbReference type="GeneID" id="938012"/>
<dbReference type="KEGG" id="bsu:BSU01330"/>
<dbReference type="PATRIC" id="fig|224308.179.peg.136"/>
<dbReference type="eggNOG" id="COG0098">
    <property type="taxonomic scope" value="Bacteria"/>
</dbReference>
<dbReference type="InParanoid" id="P21467"/>
<dbReference type="OrthoDB" id="9809045at2"/>
<dbReference type="PhylomeDB" id="P21467"/>
<dbReference type="BioCyc" id="BSUB:BSU01330-MONOMER"/>
<dbReference type="EvolutionaryTrace" id="P21467"/>
<dbReference type="PRO" id="PR:P21467"/>
<dbReference type="Proteomes" id="UP000001570">
    <property type="component" value="Chromosome"/>
</dbReference>
<dbReference type="GO" id="GO:0022627">
    <property type="term" value="C:cytosolic small ribosomal subunit"/>
    <property type="evidence" value="ECO:0000318"/>
    <property type="project" value="GO_Central"/>
</dbReference>
<dbReference type="GO" id="GO:0019843">
    <property type="term" value="F:rRNA binding"/>
    <property type="evidence" value="ECO:0007669"/>
    <property type="project" value="UniProtKB-UniRule"/>
</dbReference>
<dbReference type="GO" id="GO:0003735">
    <property type="term" value="F:structural constituent of ribosome"/>
    <property type="evidence" value="ECO:0000318"/>
    <property type="project" value="GO_Central"/>
</dbReference>
<dbReference type="GO" id="GO:0046677">
    <property type="term" value="P:response to antibiotic"/>
    <property type="evidence" value="ECO:0007669"/>
    <property type="project" value="UniProtKB-KW"/>
</dbReference>
<dbReference type="GO" id="GO:0006412">
    <property type="term" value="P:translation"/>
    <property type="evidence" value="ECO:0000318"/>
    <property type="project" value="GO_Central"/>
</dbReference>
<dbReference type="FunFam" id="3.30.160.20:FF:000001">
    <property type="entry name" value="30S ribosomal protein S5"/>
    <property type="match status" value="1"/>
</dbReference>
<dbReference type="FunFam" id="3.30.230.10:FF:000002">
    <property type="entry name" value="30S ribosomal protein S5"/>
    <property type="match status" value="1"/>
</dbReference>
<dbReference type="Gene3D" id="3.30.160.20">
    <property type="match status" value="1"/>
</dbReference>
<dbReference type="Gene3D" id="3.30.230.10">
    <property type="match status" value="1"/>
</dbReference>
<dbReference type="HAMAP" id="MF_01307_B">
    <property type="entry name" value="Ribosomal_uS5_B"/>
    <property type="match status" value="1"/>
</dbReference>
<dbReference type="InterPro" id="IPR020568">
    <property type="entry name" value="Ribosomal_Su5_D2-typ_SF"/>
</dbReference>
<dbReference type="InterPro" id="IPR000851">
    <property type="entry name" value="Ribosomal_uS5"/>
</dbReference>
<dbReference type="InterPro" id="IPR005712">
    <property type="entry name" value="Ribosomal_uS5_bac-type"/>
</dbReference>
<dbReference type="InterPro" id="IPR005324">
    <property type="entry name" value="Ribosomal_uS5_C"/>
</dbReference>
<dbReference type="InterPro" id="IPR013810">
    <property type="entry name" value="Ribosomal_uS5_N"/>
</dbReference>
<dbReference type="InterPro" id="IPR018192">
    <property type="entry name" value="Ribosomal_uS5_N_CS"/>
</dbReference>
<dbReference type="InterPro" id="IPR014721">
    <property type="entry name" value="Ribsml_uS5_D2-typ_fold_subgr"/>
</dbReference>
<dbReference type="NCBIfam" id="TIGR01021">
    <property type="entry name" value="rpsE_bact"/>
    <property type="match status" value="1"/>
</dbReference>
<dbReference type="PANTHER" id="PTHR48277">
    <property type="entry name" value="MITOCHONDRIAL RIBOSOMAL PROTEIN S5"/>
    <property type="match status" value="1"/>
</dbReference>
<dbReference type="PANTHER" id="PTHR48277:SF1">
    <property type="entry name" value="MITOCHONDRIAL RIBOSOMAL PROTEIN S5"/>
    <property type="match status" value="1"/>
</dbReference>
<dbReference type="Pfam" id="PF00333">
    <property type="entry name" value="Ribosomal_S5"/>
    <property type="match status" value="1"/>
</dbReference>
<dbReference type="Pfam" id="PF03719">
    <property type="entry name" value="Ribosomal_S5_C"/>
    <property type="match status" value="1"/>
</dbReference>
<dbReference type="SUPFAM" id="SSF54768">
    <property type="entry name" value="dsRNA-binding domain-like"/>
    <property type="match status" value="1"/>
</dbReference>
<dbReference type="SUPFAM" id="SSF54211">
    <property type="entry name" value="Ribosomal protein S5 domain 2-like"/>
    <property type="match status" value="1"/>
</dbReference>
<dbReference type="PROSITE" id="PS00585">
    <property type="entry name" value="RIBOSOMAL_S5"/>
    <property type="match status" value="1"/>
</dbReference>
<dbReference type="PROSITE" id="PS50881">
    <property type="entry name" value="S5_DSRBD"/>
    <property type="match status" value="1"/>
</dbReference>
<comment type="function">
    <text>With S4 and S12 plays an important role in translational accuracy; many suppressors of streptomycin-dependent mutants of protein S12 are found in this protein, some but not all of which decrease translational accuracy (ram, ribosomal ambiguity mutations).</text>
</comment>
<comment type="subunit">
    <text evidence="1 5">Part of the 30S ribosomal subunit (PubMed:30126986). Contacts proteins S4 and S8 (By similarity).</text>
</comment>
<comment type="domain">
    <text>The N-terminal domain interacts with the head of the 30S subunit; the C-terminal domain interacts with the body and contacts protein S4. The interaction surface between S4 and S5 is involved in control of translational fidelity.</text>
</comment>
<comment type="miscellaneous">
    <text>Altered S5 proteins have been identified in a number of mutants. Some mutations in S5 have been shown to increase translational error frequencies.</text>
</comment>
<comment type="similarity">
    <text evidence="7">Belongs to the universal ribosomal protein uS5 family.</text>
</comment>
<comment type="sequence caution" evidence="7">
    <conflict type="erroneous initiation">
        <sequence resource="EMBL-CDS" id="AAB59115"/>
    </conflict>
    <text>Truncated N-terminus.</text>
</comment>